<accession>A0A2T4VDP8</accession>
<gene>
    <name evidence="4" type="ORF">DAT35_31120</name>
    <name evidence="3" type="ORF">Ga0334635_1659</name>
</gene>
<comment type="function">
    <text evidence="2 6">Probably a dedicated protease for substrate gasdermin bGSDM; cleaves the bGSDM precursor, releasing the pore-forming moiety, which integrates into the membrane and triggers cell death. Involved in defense against bacteriophages (Probable). Expression of gasdermin bGSDM and this neighboring protease is toxic in E.coli (PubMed:35025633).</text>
</comment>
<name>PROT_VITXG</name>
<reference evidence="7 8" key="1">
    <citation type="submission" date="2018-04" db="EMBL/GenBank/DDBJ databases">
        <title>Vitiosangium phaeum 53X41T novel myxobacteria isolated from forest.</title>
        <authorList>
            <person name="Lv Y."/>
        </authorList>
    </citation>
    <scope>NUCLEOTIDE SEQUENCE [LARGE SCALE GENOMIC DNA]</scope>
    <source>
        <strain>GDMCC 1.1324</strain>
    </source>
</reference>
<reference key="2">
    <citation type="journal article" date="2022" name="Science">
        <title>Bacterial gasdermins reveal an ancient mechanism of cell death.</title>
        <authorList>
            <person name="Johnson A.G."/>
            <person name="Wein T."/>
            <person name="Mayer M.L."/>
            <person name="Duncan-Lowey B."/>
            <person name="Yirmiya E."/>
            <person name="Oppenheimer-Shaanan Y."/>
            <person name="Amitai G."/>
            <person name="Sorek R."/>
            <person name="Kranzusch P.J."/>
        </authorList>
    </citation>
    <scope>FUNCTION</scope>
    <source>
        <strain>GDMCC 1.1324</strain>
    </source>
</reference>
<organism>
    <name type="scientific">Vitiosangium sp. (strain GDMCC 1.1324)</name>
    <dbReference type="NCBI Taxonomy" id="2138576"/>
    <lineage>
        <taxon>Bacteria</taxon>
        <taxon>Pseudomonadati</taxon>
        <taxon>Myxococcota</taxon>
        <taxon>Myxococcia</taxon>
        <taxon>Myxococcales</taxon>
        <taxon>Cystobacterineae</taxon>
        <taxon>Archangiaceae</taxon>
        <taxon>Vitiosangium</taxon>
    </lineage>
</organism>
<feature type="chain" id="PRO_0000455581" description="Probable protease Ga0334635_1659">
    <location>
        <begin position="1"/>
        <end position="769"/>
    </location>
</feature>
<feature type="region of interest" description="Disordered" evidence="1">
    <location>
        <begin position="118"/>
        <end position="167"/>
    </location>
</feature>
<sequence>MSDDDKRHMELARLLVSLFPGRKLNGFLVGLLHSLSGRYRLPKELRGDRVPSSSKLARFIGTLDRERHIHSYFWDLLRRERPSRVGDIDRVARLWEEEGHWKGLESLRFPAGEVFPQVARGSSDNNGAPPLSFTLSHGDPKSDPEPSSPSRLVNTGLSEAERPESPLASDQCLVTSHAYFFWLEVGAWIEGSIEDEPVSLPEDLPSGARLRVVLFSSPGGLVLQPDADQGVLCIEGDGRVVVERPACVPPALQSRELADRRLFFPLRTPQAPGTYRLRCNIHHEGLLVQSRDVVLTVAEQPQRQSEALRSRVDYALSQTLSPTHLRQLGSATLSVLLNDDDWGTHGFRFVGGDDYRSSVHLDDAMLQEMISLARGAFRRASWGSKERYEALPSRPPYRYQGAQSEARLREDLVMMARIGRQLYDRVAEQLGQGADGADALRERMRLPGHIQLALKQGARHLVPISIFYDHRLDVALKDFTLCEAFIRASVASEPLEKSPCFQGDCPHREDRDVVCPSGFWGFRHTLALPFGMAAQGERGLMDLPGVLRIRDTPALLIAVSEDPDFVLRDNHLMRLQAMSGVAPIQVARSREKALELLRQQGSHLVYFYCHGGVDAETRAPFLQVGPLTDPYIFRDTLRVYDIRWRDPAPHPLVFINGCHTTELEPEQAIELVSGFVERAGAAGVIGTEVTIFEPLAVGFASRFMDAFLRRRLSLGASVREARLGILQHDFNPLGLVYLPFALSSLHLAGEASEGTSVAGGAGALVTPPA</sequence>
<dbReference type="EC" id="3.4.-.-" evidence="6"/>
<dbReference type="EMBL" id="PZOX01000012">
    <property type="protein sequence ID" value="PTL79886.1"/>
    <property type="molecule type" value="Genomic_DNA"/>
</dbReference>
<dbReference type="RefSeq" id="WP_108071780.1">
    <property type="nucleotide sequence ID" value="NZ_PZOX01000012.1"/>
</dbReference>
<dbReference type="OrthoDB" id="5526017at2"/>
<dbReference type="Proteomes" id="UP000240889">
    <property type="component" value="Unassembled WGS sequence"/>
</dbReference>
<dbReference type="GO" id="GO:0008233">
    <property type="term" value="F:peptidase activity"/>
    <property type="evidence" value="ECO:0007669"/>
    <property type="project" value="UniProtKB-KW"/>
</dbReference>
<dbReference type="GO" id="GO:0051607">
    <property type="term" value="P:defense response to virus"/>
    <property type="evidence" value="ECO:0007669"/>
    <property type="project" value="UniProtKB-KW"/>
</dbReference>
<dbReference type="GO" id="GO:0006508">
    <property type="term" value="P:proteolysis"/>
    <property type="evidence" value="ECO:0007669"/>
    <property type="project" value="UniProtKB-KW"/>
</dbReference>
<dbReference type="InterPro" id="IPR024983">
    <property type="entry name" value="CHAT_dom"/>
</dbReference>
<dbReference type="Pfam" id="PF12770">
    <property type="entry name" value="CHAT"/>
    <property type="match status" value="1"/>
</dbReference>
<proteinExistence type="predicted"/>
<evidence type="ECO:0000256" key="1">
    <source>
        <dbReference type="SAM" id="MobiDB-lite"/>
    </source>
</evidence>
<evidence type="ECO:0000269" key="2">
    <source>
    </source>
</evidence>
<evidence type="ECO:0000303" key="3">
    <source>
    </source>
</evidence>
<evidence type="ECO:0000303" key="4">
    <source ref="1"/>
</evidence>
<evidence type="ECO:0000305" key="5"/>
<evidence type="ECO:0000305" key="6">
    <source>
    </source>
</evidence>
<evidence type="ECO:0000312" key="7">
    <source>
        <dbReference type="EMBL" id="PTL79886.1"/>
    </source>
</evidence>
<evidence type="ECO:0000312" key="8">
    <source>
        <dbReference type="Proteomes" id="UP000240889"/>
    </source>
</evidence>
<protein>
    <recommendedName>
        <fullName evidence="5">Probable protease Ga0334635_1659</fullName>
        <ecNumber evidence="6">3.4.-.-</ecNumber>
    </recommendedName>
</protein>
<keyword id="KW-0051">Antiviral defense</keyword>
<keyword id="KW-0378">Hydrolase</keyword>
<keyword id="KW-0645">Protease</keyword>
<keyword id="KW-1185">Reference proteome</keyword>